<accession>B1HPQ8</accession>
<protein>
    <recommendedName>
        <fullName evidence="1">DNA-directed RNA polymerase subunit epsilon</fullName>
        <shortName evidence="1">RNAP epsilon subunit</shortName>
        <ecNumber evidence="1">2.7.7.6</ecNumber>
    </recommendedName>
    <alternativeName>
        <fullName evidence="1">RNA polymerase epsilon subunit</fullName>
    </alternativeName>
    <alternativeName>
        <fullName evidence="1">Transcriptase subunit epsilon</fullName>
    </alternativeName>
</protein>
<comment type="function">
    <text evidence="1">A non-essential component of RNA polymerase (RNAP).</text>
</comment>
<comment type="catalytic activity">
    <reaction evidence="1">
        <text>RNA(n) + a ribonucleoside 5'-triphosphate = RNA(n+1) + diphosphate</text>
        <dbReference type="Rhea" id="RHEA:21248"/>
        <dbReference type="Rhea" id="RHEA-COMP:14527"/>
        <dbReference type="Rhea" id="RHEA-COMP:17342"/>
        <dbReference type="ChEBI" id="CHEBI:33019"/>
        <dbReference type="ChEBI" id="CHEBI:61557"/>
        <dbReference type="ChEBI" id="CHEBI:140395"/>
        <dbReference type="EC" id="2.7.7.6"/>
    </reaction>
</comment>
<comment type="subunit">
    <text evidence="1">RNAP is composed of a core of 2 alpha, a beta and a beta' subunit. The core is associated with a delta subunit, and at least one of epsilon or omega. When a sigma factor is associated with the core the holoenzyme is formed, which can initiate transcription.</text>
</comment>
<comment type="similarity">
    <text evidence="1">Belongs to the RNA polymerase subunit epsilon family.</text>
</comment>
<keyword id="KW-0240">DNA-directed RNA polymerase</keyword>
<keyword id="KW-0548">Nucleotidyltransferase</keyword>
<keyword id="KW-0804">Transcription</keyword>
<keyword id="KW-0808">Transferase</keyword>
<name>RPOY_LYSSC</name>
<organism>
    <name type="scientific">Lysinibacillus sphaericus (strain C3-41)</name>
    <dbReference type="NCBI Taxonomy" id="444177"/>
    <lineage>
        <taxon>Bacteria</taxon>
        <taxon>Bacillati</taxon>
        <taxon>Bacillota</taxon>
        <taxon>Bacilli</taxon>
        <taxon>Bacillales</taxon>
        <taxon>Bacillaceae</taxon>
        <taxon>Lysinibacillus</taxon>
    </lineage>
</organism>
<feature type="chain" id="PRO_1000199620" description="DNA-directed RNA polymerase subunit epsilon">
    <location>
        <begin position="1"/>
        <end position="69"/>
    </location>
</feature>
<evidence type="ECO:0000255" key="1">
    <source>
        <dbReference type="HAMAP-Rule" id="MF_01553"/>
    </source>
</evidence>
<gene>
    <name evidence="1" type="primary">rpoY</name>
    <name type="ordered locus">Bsph_1352</name>
</gene>
<reference key="1">
    <citation type="journal article" date="2008" name="J. Bacteriol.">
        <title>Complete genome sequence of the mosquitocidal bacterium Bacillus sphaericus C3-41 and comparison with those of closely related Bacillus species.</title>
        <authorList>
            <person name="Hu X."/>
            <person name="Fan W."/>
            <person name="Han B."/>
            <person name="Liu H."/>
            <person name="Zheng D."/>
            <person name="Li Q."/>
            <person name="Dong W."/>
            <person name="Yan J."/>
            <person name="Gao M."/>
            <person name="Berry C."/>
            <person name="Yuan Z."/>
        </authorList>
    </citation>
    <scope>NUCLEOTIDE SEQUENCE [LARGE SCALE GENOMIC DNA]</scope>
    <source>
        <strain>C3-41</strain>
    </source>
</reference>
<proteinExistence type="inferred from homology"/>
<dbReference type="EC" id="2.7.7.6" evidence="1"/>
<dbReference type="EMBL" id="CP000817">
    <property type="protein sequence ID" value="ACA38960.1"/>
    <property type="molecule type" value="Genomic_DNA"/>
</dbReference>
<dbReference type="RefSeq" id="WP_012293082.1">
    <property type="nucleotide sequence ID" value="NC_010382.1"/>
</dbReference>
<dbReference type="SMR" id="B1HPQ8"/>
<dbReference type="EnsemblBacteria" id="ACA38960">
    <property type="protein sequence ID" value="ACA38960"/>
    <property type="gene ID" value="Bsph_1352"/>
</dbReference>
<dbReference type="KEGG" id="lsp:Bsph_1352"/>
<dbReference type="HOGENOM" id="CLU_187518_1_0_9"/>
<dbReference type="Proteomes" id="UP000002164">
    <property type="component" value="Chromosome"/>
</dbReference>
<dbReference type="GO" id="GO:0000428">
    <property type="term" value="C:DNA-directed RNA polymerase complex"/>
    <property type="evidence" value="ECO:0007669"/>
    <property type="project" value="UniProtKB-KW"/>
</dbReference>
<dbReference type="GO" id="GO:0003677">
    <property type="term" value="F:DNA binding"/>
    <property type="evidence" value="ECO:0007669"/>
    <property type="project" value="UniProtKB-UniRule"/>
</dbReference>
<dbReference type="GO" id="GO:0003899">
    <property type="term" value="F:DNA-directed RNA polymerase activity"/>
    <property type="evidence" value="ECO:0007669"/>
    <property type="project" value="UniProtKB-UniRule"/>
</dbReference>
<dbReference type="GO" id="GO:0006351">
    <property type="term" value="P:DNA-templated transcription"/>
    <property type="evidence" value="ECO:0007669"/>
    <property type="project" value="UniProtKB-UniRule"/>
</dbReference>
<dbReference type="Gene3D" id="3.10.20.730">
    <property type="entry name" value="RNAP, epsilon subunit-like"/>
    <property type="match status" value="1"/>
</dbReference>
<dbReference type="HAMAP" id="MF_01553">
    <property type="entry name" value="RNApol_bact_RpoY"/>
    <property type="match status" value="1"/>
</dbReference>
<dbReference type="InterPro" id="IPR009907">
    <property type="entry name" value="RpoY"/>
</dbReference>
<dbReference type="NCBIfam" id="NF010188">
    <property type="entry name" value="PRK13667.1"/>
    <property type="match status" value="1"/>
</dbReference>
<dbReference type="Pfam" id="PF07288">
    <property type="entry name" value="RpoY"/>
    <property type="match status" value="1"/>
</dbReference>
<sequence length="69" mass="8337">MIYKVYYQENANEIPVRENTKSLYLEAASEREVRQKLKDRNYNIEFVQLLEGNYLEYEQASPNFVLEEI</sequence>